<comment type="miscellaneous">
    <text evidence="1">Partially overlaps YDL186W.</text>
</comment>
<comment type="caution">
    <text evidence="2">Product of a dubious gene prediction unlikely to encode a functional protein. Because of that it is not part of the S.cerevisiae S288c complete/reference proteome set.</text>
</comment>
<reference key="1">
    <citation type="journal article" date="1997" name="Nature">
        <title>The nucleotide sequence of Saccharomyces cerevisiae chromosome IV.</title>
        <authorList>
            <person name="Jacq C."/>
            <person name="Alt-Moerbe J."/>
            <person name="Andre B."/>
            <person name="Arnold W."/>
            <person name="Bahr A."/>
            <person name="Ballesta J.P.G."/>
            <person name="Bargues M."/>
            <person name="Baron L."/>
            <person name="Becker A."/>
            <person name="Biteau N."/>
            <person name="Bloecker H."/>
            <person name="Blugeon C."/>
            <person name="Boskovic J."/>
            <person name="Brandt P."/>
            <person name="Brueckner M."/>
            <person name="Buitrago M.J."/>
            <person name="Coster F."/>
            <person name="Delaveau T."/>
            <person name="del Rey F."/>
            <person name="Dujon B."/>
            <person name="Eide L.G."/>
            <person name="Garcia-Cantalejo J.M."/>
            <person name="Goffeau A."/>
            <person name="Gomez-Peris A."/>
            <person name="Granotier C."/>
            <person name="Hanemann V."/>
            <person name="Hankeln T."/>
            <person name="Hoheisel J.D."/>
            <person name="Jaeger W."/>
            <person name="Jimenez A."/>
            <person name="Jonniaux J.-L."/>
            <person name="Kraemer C."/>
            <person name="Kuester H."/>
            <person name="Laamanen P."/>
            <person name="Legros Y."/>
            <person name="Louis E.J."/>
            <person name="Moeller-Rieker S."/>
            <person name="Monnet A."/>
            <person name="Moro M."/>
            <person name="Mueller-Auer S."/>
            <person name="Nussbaumer B."/>
            <person name="Paricio N."/>
            <person name="Paulin L."/>
            <person name="Perea J."/>
            <person name="Perez-Alonso M."/>
            <person name="Perez-Ortin J.E."/>
            <person name="Pohl T.M."/>
            <person name="Prydz H."/>
            <person name="Purnelle B."/>
            <person name="Rasmussen S.W."/>
            <person name="Remacha M.A."/>
            <person name="Revuelta J.L."/>
            <person name="Rieger M."/>
            <person name="Salom D."/>
            <person name="Saluz H.P."/>
            <person name="Saiz J.E."/>
            <person name="Saren A.-M."/>
            <person name="Schaefer M."/>
            <person name="Scharfe M."/>
            <person name="Schmidt E.R."/>
            <person name="Schneider C."/>
            <person name="Scholler P."/>
            <person name="Schwarz S."/>
            <person name="Soler-Mira A."/>
            <person name="Urrestarazu L.A."/>
            <person name="Verhasselt P."/>
            <person name="Vissers S."/>
            <person name="Voet M."/>
            <person name="Volckaert G."/>
            <person name="Wagner G."/>
            <person name="Wambutt R."/>
            <person name="Wedler E."/>
            <person name="Wedler H."/>
            <person name="Woelfl S."/>
            <person name="Harris D.E."/>
            <person name="Bowman S."/>
            <person name="Brown D."/>
            <person name="Churcher C.M."/>
            <person name="Connor R."/>
            <person name="Dedman K."/>
            <person name="Gentles S."/>
            <person name="Hamlin N."/>
            <person name="Hunt S."/>
            <person name="Jones L."/>
            <person name="McDonald S."/>
            <person name="Murphy L.D."/>
            <person name="Niblett D."/>
            <person name="Odell C."/>
            <person name="Oliver K."/>
            <person name="Rajandream M.A."/>
            <person name="Richards C."/>
            <person name="Shore L."/>
            <person name="Walsh S.V."/>
            <person name="Barrell B.G."/>
            <person name="Dietrich F.S."/>
            <person name="Mulligan J.T."/>
            <person name="Allen E."/>
            <person name="Araujo R."/>
            <person name="Aviles E."/>
            <person name="Berno A."/>
            <person name="Carpenter J."/>
            <person name="Chen E."/>
            <person name="Cherry J.M."/>
            <person name="Chung E."/>
            <person name="Duncan M."/>
            <person name="Hunicke-Smith S."/>
            <person name="Hyman R.W."/>
            <person name="Komp C."/>
            <person name="Lashkari D."/>
            <person name="Lew H."/>
            <person name="Lin D."/>
            <person name="Mosedale D."/>
            <person name="Nakahara K."/>
            <person name="Namath A."/>
            <person name="Oefner P."/>
            <person name="Oh C."/>
            <person name="Petel F.X."/>
            <person name="Roberts D."/>
            <person name="Schramm S."/>
            <person name="Schroeder M."/>
            <person name="Shogren T."/>
            <person name="Shroff N."/>
            <person name="Winant A."/>
            <person name="Yelton M.A."/>
            <person name="Botstein D."/>
            <person name="Davis R.W."/>
            <person name="Johnston M."/>
            <person name="Andrews S."/>
            <person name="Brinkman R."/>
            <person name="Cooper J."/>
            <person name="Ding H."/>
            <person name="Du Z."/>
            <person name="Favello A."/>
            <person name="Fulton L."/>
            <person name="Gattung S."/>
            <person name="Greco T."/>
            <person name="Hallsworth K."/>
            <person name="Hawkins J."/>
            <person name="Hillier L.W."/>
            <person name="Jier M."/>
            <person name="Johnson D."/>
            <person name="Johnston L."/>
            <person name="Kirsten J."/>
            <person name="Kucaba T."/>
            <person name="Langston Y."/>
            <person name="Latreille P."/>
            <person name="Le T."/>
            <person name="Mardis E."/>
            <person name="Menezes S."/>
            <person name="Miller N."/>
            <person name="Nhan M."/>
            <person name="Pauley A."/>
            <person name="Peluso D."/>
            <person name="Rifkin L."/>
            <person name="Riles L."/>
            <person name="Taich A."/>
            <person name="Trevaskis E."/>
            <person name="Vignati D."/>
            <person name="Wilcox L."/>
            <person name="Wohldman P."/>
            <person name="Vaudin M."/>
            <person name="Wilson R."/>
            <person name="Waterston R."/>
            <person name="Albermann K."/>
            <person name="Hani J."/>
            <person name="Heumann K."/>
            <person name="Kleine K."/>
            <person name="Mewes H.-W."/>
            <person name="Zollner A."/>
            <person name="Zaccaria P."/>
        </authorList>
    </citation>
    <scope>NUCLEOTIDE SEQUENCE [LARGE SCALE GENOMIC DNA]</scope>
    <source>
        <strain>ATCC 204508 / S288c</strain>
    </source>
</reference>
<reference key="2">
    <citation type="journal article" date="2014" name="G3 (Bethesda)">
        <title>The reference genome sequence of Saccharomyces cerevisiae: Then and now.</title>
        <authorList>
            <person name="Engel S.R."/>
            <person name="Dietrich F.S."/>
            <person name="Fisk D.G."/>
            <person name="Binkley G."/>
            <person name="Balakrishnan R."/>
            <person name="Costanzo M.C."/>
            <person name="Dwight S.S."/>
            <person name="Hitz B.C."/>
            <person name="Karra K."/>
            <person name="Nash R.S."/>
            <person name="Weng S."/>
            <person name="Wong E.D."/>
            <person name="Lloyd P."/>
            <person name="Skrzypek M.S."/>
            <person name="Miyasato S.R."/>
            <person name="Simison M."/>
            <person name="Cherry J.M."/>
        </authorList>
    </citation>
    <scope>GENOME REANNOTATION</scope>
    <source>
        <strain>ATCC 204508 / S288c</strain>
    </source>
</reference>
<reference key="3">
    <citation type="journal article" date="2007" name="Genome Res.">
        <title>Approaching a complete repository of sequence-verified protein-encoding clones for Saccharomyces cerevisiae.</title>
        <authorList>
            <person name="Hu Y."/>
            <person name="Rolfs A."/>
            <person name="Bhullar B."/>
            <person name="Murthy T.V.S."/>
            <person name="Zhu C."/>
            <person name="Berger M.F."/>
            <person name="Camargo A.A."/>
            <person name="Kelley F."/>
            <person name="McCarron S."/>
            <person name="Jepson D."/>
            <person name="Richardson A."/>
            <person name="Raphael J."/>
            <person name="Moreira D."/>
            <person name="Taycher E."/>
            <person name="Zuo D."/>
            <person name="Mohr S."/>
            <person name="Kane M.F."/>
            <person name="Williamson J."/>
            <person name="Simpson A.J.G."/>
            <person name="Bulyk M.L."/>
            <person name="Harlow E."/>
            <person name="Marsischky G."/>
            <person name="Kolodner R.D."/>
            <person name="LaBaer J."/>
        </authorList>
    </citation>
    <scope>NUCLEOTIDE SEQUENCE [GENOMIC DNA]</scope>
    <source>
        <strain>ATCC 204508 / S288c</strain>
    </source>
</reference>
<proteinExistence type="uncertain"/>
<accession>Q07613</accession>
<organism>
    <name type="scientific">Saccharomyces cerevisiae (strain ATCC 204508 / S288c)</name>
    <name type="common">Baker's yeast</name>
    <dbReference type="NCBI Taxonomy" id="559292"/>
    <lineage>
        <taxon>Eukaryota</taxon>
        <taxon>Fungi</taxon>
        <taxon>Dikarya</taxon>
        <taxon>Ascomycota</taxon>
        <taxon>Saccharomycotina</taxon>
        <taxon>Saccharomycetes</taxon>
        <taxon>Saccharomycetales</taxon>
        <taxon>Saccharomycetaceae</taxon>
        <taxon>Saccharomyces</taxon>
    </lineage>
</organism>
<gene>
    <name type="ordered locus">YDL187C</name>
</gene>
<evidence type="ECO:0000305" key="1"/>
<evidence type="ECO:0000305" key="2">
    <source>
    </source>
</evidence>
<protein>
    <recommendedName>
        <fullName>Putative uncharacterized protein YDL187C</fullName>
    </recommendedName>
</protein>
<feature type="chain" id="PRO_0000299863" description="Putative uncharacterized protein YDL187C">
    <location>
        <begin position="1"/>
        <end position="109"/>
    </location>
</feature>
<name>YD187_YEAST</name>
<dbReference type="EMBL" id="Z74235">
    <property type="protein sequence ID" value="CAA98763.1"/>
    <property type="molecule type" value="Genomic_DNA"/>
</dbReference>
<dbReference type="EMBL" id="AY693241">
    <property type="protein sequence ID" value="AAT93260.1"/>
    <property type="molecule type" value="Genomic_DNA"/>
</dbReference>
<dbReference type="PIR" id="S67742">
    <property type="entry name" value="S67742"/>
</dbReference>
<dbReference type="PaxDb" id="4932-YDL187C"/>
<dbReference type="EnsemblFungi" id="YDL187C_mRNA">
    <property type="protein sequence ID" value="YDL187C"/>
    <property type="gene ID" value="YDL187C"/>
</dbReference>
<dbReference type="AGR" id="SGD:S000002346"/>
<dbReference type="SGD" id="S000002346">
    <property type="gene designation" value="YDL187C"/>
</dbReference>
<dbReference type="HOGENOM" id="CLU_2186011_0_0_1"/>
<sequence>MQVASILQVRPPFFPQIHFLLFFFCFFVSKSRVASQRGTHFLVRICFEPPLQGCRMGKLCRPHLNHLLYLCYTAYFSNISWLSVSKSTSRNRVHKYIPYKSTELRSVAN</sequence>